<gene>
    <name evidence="8" type="primary">wetA</name>
    <name type="ORF">AN1937</name>
</gene>
<sequence length="555" mass="60276">MFAHPFDHSFNDLFNQYVNMDTSSTDANKDVSFPSEFDQLFPLDSFSTDCGDQSPVISTVQHNSQPAQDWGKDLWSLSQNTGCSTNQDSFSFQDSTQPSTALDLSIGLEADATGHSQASVPRSTPSTPPATPGPKVKGGLFTPKTIRHHRESNDRRGLLRKQSFSPGLMRSSQLQKGSCRMAYPEAWAQRLQNFTIRSSDECLPLSPPPSDILVQQENVKHTPVQMRNAAEGFQGSTELPQQIDSGYITQSPAIPMPSPSANALAGQQQRYLSQTGTSALTPSPPSARDVFSSPHSSDPQSMPSWHSESLNTPAFQYTPELSDHQTWWSPMPSEVAQRHASYQQMIASPAPQRPVQAAANHGDFLQGGLMIQLDPTQFDISSSFPSSTIPTTANNHDNLAYNVEAHAPQKYVDASSFNTQAVPHPSRSPSISPKADTSPRHGSANRDGMAMKNAPRRPHGRKLSGQSTSTPKPVKTPNSLSTSPRGGKSVTVSFVNFTANDRQKILTGVAPSGSSKTKARREQEARDRRRKLSEAALQAVRKAGGDVEALEAVLC</sequence>
<proteinExistence type="evidence at transcript level"/>
<protein>
    <recommendedName>
        <fullName evidence="9">Developmental regulatory protein wetA</fullName>
    </recommendedName>
</protein>
<organism>
    <name type="scientific">Emericella nidulans (strain FGSC A4 / ATCC 38163 / CBS 112.46 / NRRL 194 / M139)</name>
    <name type="common">Aspergillus nidulans</name>
    <dbReference type="NCBI Taxonomy" id="227321"/>
    <lineage>
        <taxon>Eukaryota</taxon>
        <taxon>Fungi</taxon>
        <taxon>Dikarya</taxon>
        <taxon>Ascomycota</taxon>
        <taxon>Pezizomycotina</taxon>
        <taxon>Eurotiomycetes</taxon>
        <taxon>Eurotiomycetidae</taxon>
        <taxon>Eurotiales</taxon>
        <taxon>Aspergillaceae</taxon>
        <taxon>Aspergillus</taxon>
        <taxon>Aspergillus subgen. Nidulantes</taxon>
    </lineage>
</organism>
<comment type="function">
    <text evidence="2 3 5 7">BrlA, abaA and wetA are pivotal regulators of conidiophore development and conidium maturation. They act individually and together to regulate their own expression and that of numerous other sporulation-specific genes (PubMed:2655931). Responsible for activating a set of genes whose products make up the final two conidial wall layers or direct their assembly and, through this activity, is responsible for acquisition of spore dormancy (PubMed:1986246, PubMed:2180753, PubMed:7704830).</text>
</comment>
<comment type="developmental stage">
    <text>The wetA gene is activated only during conidiophore development, and its mRNA accumulates preferentially in mature conidia.</text>
</comment>
<comment type="induction">
    <text evidence="4 5 6">Expression is induced during conidiation, after conidia had begun to form (PubMed:2823119). Positively regulated by abaA (PubMed:2655931). Negatively regulated by velC (PubMed:24587098).</text>
</comment>
<comment type="domain">
    <text>Has an acidic N-terminus (AA 1-52) followed by a Ser-, Thr-, Pro-rich domain (AA 125-233) and a basic C-terminus (AA 461-555).</text>
</comment>
<comment type="disruption phenotype">
    <text evidence="6">Prevents the formation of normal conidiophores (PubMed:2823119).</text>
</comment>
<comment type="similarity">
    <text evidence="9">Belongs to the wetA family.</text>
</comment>
<dbReference type="EMBL" id="M60528">
    <property type="protein sequence ID" value="AAA33330.1"/>
    <property type="molecule type" value="Genomic_DNA"/>
</dbReference>
<dbReference type="EMBL" id="AACD01000029">
    <property type="protein sequence ID" value="EAA65102.1"/>
    <property type="molecule type" value="Genomic_DNA"/>
</dbReference>
<dbReference type="EMBL" id="BN001307">
    <property type="protein sequence ID" value="CBF85858.1"/>
    <property type="molecule type" value="Genomic_DNA"/>
</dbReference>
<dbReference type="PIR" id="A39665">
    <property type="entry name" value="RGASWA"/>
</dbReference>
<dbReference type="RefSeq" id="XP_659541.1">
    <property type="nucleotide sequence ID" value="XM_654449.1"/>
</dbReference>
<dbReference type="STRING" id="227321.P22022"/>
<dbReference type="EnsemblFungi" id="CBF85858">
    <property type="protein sequence ID" value="CBF85858"/>
    <property type="gene ID" value="ANIA_01937"/>
</dbReference>
<dbReference type="GeneID" id="2875691"/>
<dbReference type="KEGG" id="ani:ANIA_01937"/>
<dbReference type="VEuPathDB" id="FungiDB:AN1937"/>
<dbReference type="eggNOG" id="ENOG502S8IT">
    <property type="taxonomic scope" value="Eukaryota"/>
</dbReference>
<dbReference type="HOGENOM" id="CLU_030750_0_0_1"/>
<dbReference type="InParanoid" id="P22022"/>
<dbReference type="OMA" id="MFAQPFD"/>
<dbReference type="OrthoDB" id="2575228at2759"/>
<dbReference type="Proteomes" id="UP000000560">
    <property type="component" value="Chromosome VII"/>
</dbReference>
<dbReference type="GO" id="GO:0042243">
    <property type="term" value="P:asexual spore wall assembly"/>
    <property type="evidence" value="ECO:0000315"/>
    <property type="project" value="AspGD"/>
</dbReference>
<dbReference type="GO" id="GO:0048315">
    <property type="term" value="P:conidium formation"/>
    <property type="evidence" value="ECO:0000315"/>
    <property type="project" value="CACAO"/>
</dbReference>
<dbReference type="GO" id="GO:0046148">
    <property type="term" value="P:pigment biosynthetic process"/>
    <property type="evidence" value="ECO:0000315"/>
    <property type="project" value="AspGD"/>
</dbReference>
<dbReference type="GO" id="GO:0075307">
    <property type="term" value="P:positive regulation of conidium formation"/>
    <property type="evidence" value="ECO:0000315"/>
    <property type="project" value="AspGD"/>
</dbReference>
<dbReference type="GO" id="GO:0045944">
    <property type="term" value="P:positive regulation of transcription by RNA polymerase II"/>
    <property type="evidence" value="ECO:0000315"/>
    <property type="project" value="AspGD"/>
</dbReference>
<dbReference type="GO" id="GO:0006357">
    <property type="term" value="P:regulation of transcription by RNA polymerase II"/>
    <property type="evidence" value="ECO:0000315"/>
    <property type="project" value="AspGD"/>
</dbReference>
<dbReference type="InterPro" id="IPR040112">
    <property type="entry name" value="WetA"/>
</dbReference>
<dbReference type="PANTHER" id="PTHR22934:SF25">
    <property type="entry name" value="DEVELOPMENTAL REGULATORY PROTEIN WETA"/>
    <property type="match status" value="1"/>
</dbReference>
<dbReference type="PANTHER" id="PTHR22934">
    <property type="entry name" value="PROTEIN ESC1/WETA-RELATED"/>
    <property type="match status" value="1"/>
</dbReference>
<accession>P22022</accession>
<accession>C8VKV9</accession>
<accession>Q5BBZ3</accession>
<name>WETA_EMENI</name>
<evidence type="ECO:0000256" key="1">
    <source>
        <dbReference type="SAM" id="MobiDB-lite"/>
    </source>
</evidence>
<evidence type="ECO:0000269" key="2">
    <source>
    </source>
</evidence>
<evidence type="ECO:0000269" key="3">
    <source>
    </source>
</evidence>
<evidence type="ECO:0000269" key="4">
    <source>
    </source>
</evidence>
<evidence type="ECO:0000269" key="5">
    <source>
    </source>
</evidence>
<evidence type="ECO:0000269" key="6">
    <source>
    </source>
</evidence>
<evidence type="ECO:0000269" key="7">
    <source>
    </source>
</evidence>
<evidence type="ECO:0000303" key="8">
    <source>
    </source>
</evidence>
<evidence type="ECO:0000305" key="9"/>
<keyword id="KW-0010">Activator</keyword>
<keyword id="KW-0183">Conidiation</keyword>
<keyword id="KW-1185">Reference proteome</keyword>
<keyword id="KW-0749">Sporulation</keyword>
<keyword id="KW-0804">Transcription</keyword>
<keyword id="KW-0805">Transcription regulation</keyword>
<feature type="chain" id="PRO_0000065961" description="Developmental regulatory protein wetA">
    <location>
        <begin position="1"/>
        <end position="555"/>
    </location>
</feature>
<feature type="region of interest" description="Disordered" evidence="1">
    <location>
        <begin position="113"/>
        <end position="171"/>
    </location>
</feature>
<feature type="region of interest" description="Disordered" evidence="1">
    <location>
        <begin position="250"/>
        <end position="310"/>
    </location>
</feature>
<feature type="region of interest" description="Disordered" evidence="1">
    <location>
        <begin position="419"/>
        <end position="488"/>
    </location>
</feature>
<feature type="region of interest" description="Disordered" evidence="1">
    <location>
        <begin position="508"/>
        <end position="531"/>
    </location>
</feature>
<feature type="compositionally biased region" description="Polar residues" evidence="1">
    <location>
        <begin position="162"/>
        <end position="171"/>
    </location>
</feature>
<feature type="compositionally biased region" description="Polar residues" evidence="1">
    <location>
        <begin position="259"/>
        <end position="281"/>
    </location>
</feature>
<feature type="compositionally biased region" description="Polar residues" evidence="1">
    <location>
        <begin position="293"/>
        <end position="310"/>
    </location>
</feature>
<feature type="compositionally biased region" description="Polar residues" evidence="1">
    <location>
        <begin position="419"/>
        <end position="431"/>
    </location>
</feature>
<feature type="compositionally biased region" description="Polar residues" evidence="1">
    <location>
        <begin position="464"/>
        <end position="488"/>
    </location>
</feature>
<reference key="1">
    <citation type="journal article" date="1991" name="Mol. Cell. Biol.">
        <title>Aspergillus nidulans wetA activates spore-specific gene expression.</title>
        <authorList>
            <person name="Marshall M.A."/>
            <person name="Timberlake W.E."/>
        </authorList>
    </citation>
    <scope>NUCLEOTIDE SEQUENCE [GENOMIC DNA]</scope>
    <scope>FUNCTION</scope>
</reference>
<reference key="2">
    <citation type="journal article" date="2005" name="Nature">
        <title>Sequencing of Aspergillus nidulans and comparative analysis with A. fumigatus and A. oryzae.</title>
        <authorList>
            <person name="Galagan J.E."/>
            <person name="Calvo S.E."/>
            <person name="Cuomo C."/>
            <person name="Ma L.-J."/>
            <person name="Wortman J.R."/>
            <person name="Batzoglou S."/>
            <person name="Lee S.-I."/>
            <person name="Bastuerkmen M."/>
            <person name="Spevak C.C."/>
            <person name="Clutterbuck J."/>
            <person name="Kapitonov V."/>
            <person name="Jurka J."/>
            <person name="Scazzocchio C."/>
            <person name="Farman M.L."/>
            <person name="Butler J."/>
            <person name="Purcell S."/>
            <person name="Harris S."/>
            <person name="Braus G.H."/>
            <person name="Draht O."/>
            <person name="Busch S."/>
            <person name="D'Enfert C."/>
            <person name="Bouchier C."/>
            <person name="Goldman G.H."/>
            <person name="Bell-Pedersen D."/>
            <person name="Griffiths-Jones S."/>
            <person name="Doonan J.H."/>
            <person name="Yu J."/>
            <person name="Vienken K."/>
            <person name="Pain A."/>
            <person name="Freitag M."/>
            <person name="Selker E.U."/>
            <person name="Archer D.B."/>
            <person name="Penalva M.A."/>
            <person name="Oakley B.R."/>
            <person name="Momany M."/>
            <person name="Tanaka T."/>
            <person name="Kumagai T."/>
            <person name="Asai K."/>
            <person name="Machida M."/>
            <person name="Nierman W.C."/>
            <person name="Denning D.W."/>
            <person name="Caddick M.X."/>
            <person name="Hynes M."/>
            <person name="Paoletti M."/>
            <person name="Fischer R."/>
            <person name="Miller B.L."/>
            <person name="Dyer P.S."/>
            <person name="Sachs M.S."/>
            <person name="Osmani S.A."/>
            <person name="Birren B.W."/>
        </authorList>
    </citation>
    <scope>NUCLEOTIDE SEQUENCE [LARGE SCALE GENOMIC DNA]</scope>
    <source>
        <strain>FGSC A4 / ATCC 38163 / CBS 112.46 / NRRL 194 / M139</strain>
    </source>
</reference>
<reference key="3">
    <citation type="journal article" date="2009" name="Fungal Genet. Biol.">
        <title>The 2008 update of the Aspergillus nidulans genome annotation: a community effort.</title>
        <authorList>
            <person name="Wortman J.R."/>
            <person name="Gilsenan J.M."/>
            <person name="Joardar V."/>
            <person name="Deegan J."/>
            <person name="Clutterbuck J."/>
            <person name="Andersen M.R."/>
            <person name="Archer D."/>
            <person name="Bencina M."/>
            <person name="Braus G."/>
            <person name="Coutinho P."/>
            <person name="von Dohren H."/>
            <person name="Doonan J."/>
            <person name="Driessen A.J."/>
            <person name="Durek P."/>
            <person name="Espeso E."/>
            <person name="Fekete E."/>
            <person name="Flipphi M."/>
            <person name="Estrada C.G."/>
            <person name="Geysens S."/>
            <person name="Goldman G."/>
            <person name="de Groot P.W."/>
            <person name="Hansen K."/>
            <person name="Harris S.D."/>
            <person name="Heinekamp T."/>
            <person name="Helmstaedt K."/>
            <person name="Henrissat B."/>
            <person name="Hofmann G."/>
            <person name="Homan T."/>
            <person name="Horio T."/>
            <person name="Horiuchi H."/>
            <person name="James S."/>
            <person name="Jones M."/>
            <person name="Karaffa L."/>
            <person name="Karanyi Z."/>
            <person name="Kato M."/>
            <person name="Keller N."/>
            <person name="Kelly D.E."/>
            <person name="Kiel J.A."/>
            <person name="Kim J.M."/>
            <person name="van der Klei I.J."/>
            <person name="Klis F.M."/>
            <person name="Kovalchuk A."/>
            <person name="Krasevec N."/>
            <person name="Kubicek C.P."/>
            <person name="Liu B."/>
            <person name="Maccabe A."/>
            <person name="Meyer V."/>
            <person name="Mirabito P."/>
            <person name="Miskei M."/>
            <person name="Mos M."/>
            <person name="Mullins J."/>
            <person name="Nelson D.R."/>
            <person name="Nielsen J."/>
            <person name="Oakley B.R."/>
            <person name="Osmani S.A."/>
            <person name="Pakula T."/>
            <person name="Paszewski A."/>
            <person name="Paulsen I."/>
            <person name="Pilsyk S."/>
            <person name="Pocsi I."/>
            <person name="Punt P.J."/>
            <person name="Ram A.F."/>
            <person name="Ren Q."/>
            <person name="Robellet X."/>
            <person name="Robson G."/>
            <person name="Seiboth B."/>
            <person name="van Solingen P."/>
            <person name="Specht T."/>
            <person name="Sun J."/>
            <person name="Taheri-Talesh N."/>
            <person name="Takeshita N."/>
            <person name="Ussery D."/>
            <person name="vanKuyk P.A."/>
            <person name="Visser H."/>
            <person name="van de Vondervoort P.J."/>
            <person name="de Vries R.P."/>
            <person name="Walton J."/>
            <person name="Xiang X."/>
            <person name="Xiong Y."/>
            <person name="Zeng A.P."/>
            <person name="Brandt B.W."/>
            <person name="Cornell M.J."/>
            <person name="van den Hondel C.A."/>
            <person name="Visser J."/>
            <person name="Oliver S.G."/>
            <person name="Turner G."/>
        </authorList>
    </citation>
    <scope>GENOME REANNOTATION</scope>
    <source>
        <strain>FGSC A4 / ATCC 38163 / CBS 112.46 / NRRL 194 / M139</strain>
    </source>
</reference>
<reference key="4">
    <citation type="journal article" date="1987" name="Mol. Cell. Biol.">
        <title>Isolation and physical characterization of three essential conidiation genes from Aspergillus nidulans.</title>
        <authorList>
            <person name="Boylan M.T."/>
            <person name="Mirabito P.M."/>
            <person name="Willett C.E."/>
            <person name="Zimmerman C.R."/>
            <person name="Timberlake W.E."/>
        </authorList>
    </citation>
    <scope>DISRUPTION PHENOTYPE</scope>
    <scope>INDUCTION</scope>
</reference>
<reference key="5">
    <citation type="journal article" date="1989" name="Cell">
        <title>Interactions of three sequentially expressed genes control temporal and spatial specificity in Aspergillus development.</title>
        <authorList>
            <person name="Mirabito P.M."/>
            <person name="Adams T.H."/>
            <person name="Timberlake W.E."/>
        </authorList>
    </citation>
    <scope>FUNCTION</scope>
    <scope>INDUCTION</scope>
</reference>
<reference key="6">
    <citation type="journal article" date="1990" name="Dev. Biol.">
        <title>Conidium differentiation in Aspergillus nidulans wild-type and wet-white (wetA) mutant strains.</title>
        <authorList>
            <person name="Sewall T.C."/>
            <person name="Mims C.W."/>
            <person name="Timberlake W.E."/>
        </authorList>
    </citation>
    <scope>FUNCTION</scope>
</reference>
<reference key="7">
    <citation type="journal article" date="1994" name="Can. J. Microbiol.">
        <title>Cellular effects of misscheduled brlA, abaA, and wetA expression in Aspergillus nidulans.</title>
        <authorList>
            <person name="Sewall T.C."/>
        </authorList>
    </citation>
    <scope>FUNCTION</scope>
</reference>
<reference key="8">
    <citation type="journal article" date="2014" name="PLoS ONE">
        <title>VelC positively controls sexual development in Aspergillus nidulans.</title>
        <authorList>
            <person name="Park H.S."/>
            <person name="Nam T.Y."/>
            <person name="Han K.H."/>
            <person name="Kim S.C."/>
            <person name="Yu J.H."/>
        </authorList>
    </citation>
    <scope>INDUCTION</scope>
</reference>